<feature type="signal peptide" evidence="2">
    <location>
        <begin position="1"/>
        <end position="24"/>
    </location>
</feature>
<feature type="chain" id="PRO_0000223358" description="Nucleotide exchange factor Sil1">
    <location>
        <begin position="25"/>
        <end position="429"/>
    </location>
</feature>
<feature type="region of interest" description="Disordered" evidence="3">
    <location>
        <begin position="70"/>
        <end position="98"/>
    </location>
</feature>
<feature type="coiled-coil region" evidence="2">
    <location>
        <begin position="104"/>
        <end position="135"/>
    </location>
</feature>
<feature type="short sequence motif" description="Prevents secretion from ER" evidence="2">
    <location>
        <begin position="426"/>
        <end position="429"/>
    </location>
</feature>
<feature type="compositionally biased region" description="Polar residues" evidence="3">
    <location>
        <begin position="75"/>
        <end position="84"/>
    </location>
</feature>
<feature type="compositionally biased region" description="Basic and acidic residues" evidence="3">
    <location>
        <begin position="85"/>
        <end position="94"/>
    </location>
</feature>
<feature type="glycosylation site" description="N-linked (GlcNAc...) asparagine" evidence="2">
    <location>
        <position position="29"/>
    </location>
</feature>
<feature type="glycosylation site" description="N-linked (GlcNAc...) asparagine" evidence="2">
    <location>
        <position position="150"/>
    </location>
</feature>
<feature type="glycosylation site" description="N-linked (GlcNAc...) asparagine" evidence="2">
    <location>
        <position position="199"/>
    </location>
</feature>
<feature type="glycosylation site" description="N-linked (GlcNAc...) asparagine" evidence="2">
    <location>
        <position position="400"/>
    </location>
</feature>
<accession>Q9VBV5</accession>
<gene>
    <name evidence="5" type="primary">Sil1</name>
    <name evidence="5" type="ORF">CG10420</name>
</gene>
<proteinExistence type="evidence at transcript level"/>
<name>SIL1_DROME</name>
<sequence>MSGKQVVILLGSVLILGCLQVAAATETDNKTNDFVATDEWQTIAEGQAIPRGLHVRINLQTGLKEAKLLDESERGTSLQSQPDDQNARESHDDNEPLALDYKPDIIEESIRRVKEQKKSYAELRKAYKEFQKNFRTDGELIVQLIDQFRNFSRTPLESEMRSKLDCLENLEYLLHQIDNALMFIDNGGLDDVLLPIVVNDTSTSLRVSAMRVLGSLASNNPKAQIKVFEKNFGSHLAQILTSSGNVGEISAALHAFGALLRKFPLAQQRVLSTSGTQALIKVLQSPDVELRSKAKVVTLISDLVLEKRSVLDVSKDDPEASSTMAQYVLLDFESWLKTPGYCAAVDTVLTKEFLLLLEQPEVVEQFATALETTEDMCTSTWSQSSGLRHALLTVRNRYANSTDEYRLEVSQILAKLCERLFNKPKHTEL</sequence>
<keyword id="KW-0175">Coiled coil</keyword>
<keyword id="KW-0256">Endoplasmic reticulum</keyword>
<keyword id="KW-0325">Glycoprotein</keyword>
<keyword id="KW-0653">Protein transport</keyword>
<keyword id="KW-1185">Reference proteome</keyword>
<keyword id="KW-0732">Signal</keyword>
<keyword id="KW-0811">Translocation</keyword>
<keyword id="KW-0813">Transport</keyword>
<protein>
    <recommendedName>
        <fullName evidence="5">Nucleotide exchange factor Sil1</fullName>
    </recommendedName>
</protein>
<organism>
    <name type="scientific">Drosophila melanogaster</name>
    <name type="common">Fruit fly</name>
    <dbReference type="NCBI Taxonomy" id="7227"/>
    <lineage>
        <taxon>Eukaryota</taxon>
        <taxon>Metazoa</taxon>
        <taxon>Ecdysozoa</taxon>
        <taxon>Arthropoda</taxon>
        <taxon>Hexapoda</taxon>
        <taxon>Insecta</taxon>
        <taxon>Pterygota</taxon>
        <taxon>Neoptera</taxon>
        <taxon>Endopterygota</taxon>
        <taxon>Diptera</taxon>
        <taxon>Brachycera</taxon>
        <taxon>Muscomorpha</taxon>
        <taxon>Ephydroidea</taxon>
        <taxon>Drosophilidae</taxon>
        <taxon>Drosophila</taxon>
        <taxon>Sophophora</taxon>
    </lineage>
</organism>
<reference key="1">
    <citation type="journal article" date="2000" name="Science">
        <title>The genome sequence of Drosophila melanogaster.</title>
        <authorList>
            <person name="Adams M.D."/>
            <person name="Celniker S.E."/>
            <person name="Holt R.A."/>
            <person name="Evans C.A."/>
            <person name="Gocayne J.D."/>
            <person name="Amanatides P.G."/>
            <person name="Scherer S.E."/>
            <person name="Li P.W."/>
            <person name="Hoskins R.A."/>
            <person name="Galle R.F."/>
            <person name="George R.A."/>
            <person name="Lewis S.E."/>
            <person name="Richards S."/>
            <person name="Ashburner M."/>
            <person name="Henderson S.N."/>
            <person name="Sutton G.G."/>
            <person name="Wortman J.R."/>
            <person name="Yandell M.D."/>
            <person name="Zhang Q."/>
            <person name="Chen L.X."/>
            <person name="Brandon R.C."/>
            <person name="Rogers Y.-H.C."/>
            <person name="Blazej R.G."/>
            <person name="Champe M."/>
            <person name="Pfeiffer B.D."/>
            <person name="Wan K.H."/>
            <person name="Doyle C."/>
            <person name="Baxter E.G."/>
            <person name="Helt G."/>
            <person name="Nelson C.R."/>
            <person name="Miklos G.L.G."/>
            <person name="Abril J.F."/>
            <person name="Agbayani A."/>
            <person name="An H.-J."/>
            <person name="Andrews-Pfannkoch C."/>
            <person name="Baldwin D."/>
            <person name="Ballew R.M."/>
            <person name="Basu A."/>
            <person name="Baxendale J."/>
            <person name="Bayraktaroglu L."/>
            <person name="Beasley E.M."/>
            <person name="Beeson K.Y."/>
            <person name="Benos P.V."/>
            <person name="Berman B.P."/>
            <person name="Bhandari D."/>
            <person name="Bolshakov S."/>
            <person name="Borkova D."/>
            <person name="Botchan M.R."/>
            <person name="Bouck J."/>
            <person name="Brokstein P."/>
            <person name="Brottier P."/>
            <person name="Burtis K.C."/>
            <person name="Busam D.A."/>
            <person name="Butler H."/>
            <person name="Cadieu E."/>
            <person name="Center A."/>
            <person name="Chandra I."/>
            <person name="Cherry J.M."/>
            <person name="Cawley S."/>
            <person name="Dahlke C."/>
            <person name="Davenport L.B."/>
            <person name="Davies P."/>
            <person name="de Pablos B."/>
            <person name="Delcher A."/>
            <person name="Deng Z."/>
            <person name="Mays A.D."/>
            <person name="Dew I."/>
            <person name="Dietz S.M."/>
            <person name="Dodson K."/>
            <person name="Doup L.E."/>
            <person name="Downes M."/>
            <person name="Dugan-Rocha S."/>
            <person name="Dunkov B.C."/>
            <person name="Dunn P."/>
            <person name="Durbin K.J."/>
            <person name="Evangelista C.C."/>
            <person name="Ferraz C."/>
            <person name="Ferriera S."/>
            <person name="Fleischmann W."/>
            <person name="Fosler C."/>
            <person name="Gabrielian A.E."/>
            <person name="Garg N.S."/>
            <person name="Gelbart W.M."/>
            <person name="Glasser K."/>
            <person name="Glodek A."/>
            <person name="Gong F."/>
            <person name="Gorrell J.H."/>
            <person name="Gu Z."/>
            <person name="Guan P."/>
            <person name="Harris M."/>
            <person name="Harris N.L."/>
            <person name="Harvey D.A."/>
            <person name="Heiman T.J."/>
            <person name="Hernandez J.R."/>
            <person name="Houck J."/>
            <person name="Hostin D."/>
            <person name="Houston K.A."/>
            <person name="Howland T.J."/>
            <person name="Wei M.-H."/>
            <person name="Ibegwam C."/>
            <person name="Jalali M."/>
            <person name="Kalush F."/>
            <person name="Karpen G.H."/>
            <person name="Ke Z."/>
            <person name="Kennison J.A."/>
            <person name="Ketchum K.A."/>
            <person name="Kimmel B.E."/>
            <person name="Kodira C.D."/>
            <person name="Kraft C.L."/>
            <person name="Kravitz S."/>
            <person name="Kulp D."/>
            <person name="Lai Z."/>
            <person name="Lasko P."/>
            <person name="Lei Y."/>
            <person name="Levitsky A.A."/>
            <person name="Li J.H."/>
            <person name="Li Z."/>
            <person name="Liang Y."/>
            <person name="Lin X."/>
            <person name="Liu X."/>
            <person name="Mattei B."/>
            <person name="McIntosh T.C."/>
            <person name="McLeod M.P."/>
            <person name="McPherson D."/>
            <person name="Merkulov G."/>
            <person name="Milshina N.V."/>
            <person name="Mobarry C."/>
            <person name="Morris J."/>
            <person name="Moshrefi A."/>
            <person name="Mount S.M."/>
            <person name="Moy M."/>
            <person name="Murphy B."/>
            <person name="Murphy L."/>
            <person name="Muzny D.M."/>
            <person name="Nelson D.L."/>
            <person name="Nelson D.R."/>
            <person name="Nelson K.A."/>
            <person name="Nixon K."/>
            <person name="Nusskern D.R."/>
            <person name="Pacleb J.M."/>
            <person name="Palazzolo M."/>
            <person name="Pittman G.S."/>
            <person name="Pan S."/>
            <person name="Pollard J."/>
            <person name="Puri V."/>
            <person name="Reese M.G."/>
            <person name="Reinert K."/>
            <person name="Remington K."/>
            <person name="Saunders R.D.C."/>
            <person name="Scheeler F."/>
            <person name="Shen H."/>
            <person name="Shue B.C."/>
            <person name="Siden-Kiamos I."/>
            <person name="Simpson M."/>
            <person name="Skupski M.P."/>
            <person name="Smith T.J."/>
            <person name="Spier E."/>
            <person name="Spradling A.C."/>
            <person name="Stapleton M."/>
            <person name="Strong R."/>
            <person name="Sun E."/>
            <person name="Svirskas R."/>
            <person name="Tector C."/>
            <person name="Turner R."/>
            <person name="Venter E."/>
            <person name="Wang A.H."/>
            <person name="Wang X."/>
            <person name="Wang Z.-Y."/>
            <person name="Wassarman D.A."/>
            <person name="Weinstock G.M."/>
            <person name="Weissenbach J."/>
            <person name="Williams S.M."/>
            <person name="Woodage T."/>
            <person name="Worley K.C."/>
            <person name="Wu D."/>
            <person name="Yang S."/>
            <person name="Yao Q.A."/>
            <person name="Ye J."/>
            <person name="Yeh R.-F."/>
            <person name="Zaveri J.S."/>
            <person name="Zhan M."/>
            <person name="Zhang G."/>
            <person name="Zhao Q."/>
            <person name="Zheng L."/>
            <person name="Zheng X.H."/>
            <person name="Zhong F.N."/>
            <person name="Zhong W."/>
            <person name="Zhou X."/>
            <person name="Zhu S.C."/>
            <person name="Zhu X."/>
            <person name="Smith H.O."/>
            <person name="Gibbs R.A."/>
            <person name="Myers E.W."/>
            <person name="Rubin G.M."/>
            <person name="Venter J.C."/>
        </authorList>
    </citation>
    <scope>NUCLEOTIDE SEQUENCE [LARGE SCALE GENOMIC DNA]</scope>
    <source>
        <strain>Berkeley</strain>
    </source>
</reference>
<reference key="2">
    <citation type="journal article" date="2002" name="Genome Biol.">
        <title>Annotation of the Drosophila melanogaster euchromatic genome: a systematic review.</title>
        <authorList>
            <person name="Misra S."/>
            <person name="Crosby M.A."/>
            <person name="Mungall C.J."/>
            <person name="Matthews B.B."/>
            <person name="Campbell K.S."/>
            <person name="Hradecky P."/>
            <person name="Huang Y."/>
            <person name="Kaminker J.S."/>
            <person name="Millburn G.H."/>
            <person name="Prochnik S.E."/>
            <person name="Smith C.D."/>
            <person name="Tupy J.L."/>
            <person name="Whitfield E.J."/>
            <person name="Bayraktaroglu L."/>
            <person name="Berman B.P."/>
            <person name="Bettencourt B.R."/>
            <person name="Celniker S.E."/>
            <person name="de Grey A.D.N.J."/>
            <person name="Drysdale R.A."/>
            <person name="Harris N.L."/>
            <person name="Richter J."/>
            <person name="Russo S."/>
            <person name="Schroeder A.J."/>
            <person name="Shu S.Q."/>
            <person name="Stapleton M."/>
            <person name="Yamada C."/>
            <person name="Ashburner M."/>
            <person name="Gelbart W.M."/>
            <person name="Rubin G.M."/>
            <person name="Lewis S.E."/>
        </authorList>
    </citation>
    <scope>GENOME REANNOTATION</scope>
    <source>
        <strain>Berkeley</strain>
    </source>
</reference>
<reference key="3">
    <citation type="journal article" date="2002" name="Genome Biol.">
        <title>A Drosophila full-length cDNA resource.</title>
        <authorList>
            <person name="Stapleton M."/>
            <person name="Carlson J.W."/>
            <person name="Brokstein P."/>
            <person name="Yu C."/>
            <person name="Champe M."/>
            <person name="George R.A."/>
            <person name="Guarin H."/>
            <person name="Kronmiller B."/>
            <person name="Pacleb J.M."/>
            <person name="Park S."/>
            <person name="Wan K.H."/>
            <person name="Rubin G.M."/>
            <person name="Celniker S.E."/>
        </authorList>
    </citation>
    <scope>NUCLEOTIDE SEQUENCE [LARGE SCALE MRNA]</scope>
    <source>
        <strain>Berkeley</strain>
        <tissue>Head</tissue>
    </source>
</reference>
<evidence type="ECO:0000250" key="1"/>
<evidence type="ECO:0000255" key="2"/>
<evidence type="ECO:0000256" key="3">
    <source>
        <dbReference type="SAM" id="MobiDB-lite"/>
    </source>
</evidence>
<evidence type="ECO:0000305" key="4"/>
<evidence type="ECO:0000312" key="5">
    <source>
        <dbReference type="FlyBase" id="FBgn0039296"/>
    </source>
</evidence>
<comment type="function">
    <text evidence="1">Required for protein translocation and folding in the endoplasmic reticulum (ER). Functions as a nucleotide exchange factor for an ER lumenal chaperone of HSP70 family (By similarity).</text>
</comment>
<comment type="subcellular location">
    <subcellularLocation>
        <location evidence="1">Endoplasmic reticulum lumen</location>
    </subcellularLocation>
</comment>
<comment type="similarity">
    <text evidence="4">Belongs to the SIL1 family.</text>
</comment>
<dbReference type="EMBL" id="AE014297">
    <property type="protein sequence ID" value="AAF56422.1"/>
    <property type="molecule type" value="Genomic_DNA"/>
</dbReference>
<dbReference type="EMBL" id="AY058471">
    <property type="protein sequence ID" value="AAL13700.1"/>
    <property type="molecule type" value="mRNA"/>
</dbReference>
<dbReference type="RefSeq" id="NP_651356.1">
    <property type="nucleotide sequence ID" value="NM_143099.4"/>
</dbReference>
<dbReference type="SMR" id="Q9VBV5"/>
<dbReference type="BioGRID" id="67953">
    <property type="interactions" value="14"/>
</dbReference>
<dbReference type="FunCoup" id="Q9VBV5">
    <property type="interactions" value="791"/>
</dbReference>
<dbReference type="IntAct" id="Q9VBV5">
    <property type="interactions" value="16"/>
</dbReference>
<dbReference type="STRING" id="7227.FBpp0084244"/>
<dbReference type="GlyCosmos" id="Q9VBV5">
    <property type="glycosylation" value="4 sites, No reported glycans"/>
</dbReference>
<dbReference type="GlyGen" id="Q9VBV5">
    <property type="glycosylation" value="4 sites"/>
</dbReference>
<dbReference type="PaxDb" id="7227-FBpp0084244"/>
<dbReference type="DNASU" id="43034"/>
<dbReference type="EnsemblMetazoa" id="FBtr0084870">
    <property type="protein sequence ID" value="FBpp0084244"/>
    <property type="gene ID" value="FBgn0039296"/>
</dbReference>
<dbReference type="GeneID" id="43034"/>
<dbReference type="KEGG" id="dme:Dmel_CG10420"/>
<dbReference type="UCSC" id="CG10420-RA">
    <property type="organism name" value="d. melanogaster"/>
</dbReference>
<dbReference type="AGR" id="FB:FBgn0039296"/>
<dbReference type="CTD" id="64374"/>
<dbReference type="FlyBase" id="FBgn0039296">
    <property type="gene designation" value="Sil1"/>
</dbReference>
<dbReference type="VEuPathDB" id="VectorBase:FBgn0039296"/>
<dbReference type="eggNOG" id="KOG2160">
    <property type="taxonomic scope" value="Eukaryota"/>
</dbReference>
<dbReference type="GeneTree" id="ENSGT00940000153909"/>
<dbReference type="HOGENOM" id="CLU_046547_1_0_1"/>
<dbReference type="InParanoid" id="Q9VBV5"/>
<dbReference type="OMA" id="NRFAHSQ"/>
<dbReference type="OrthoDB" id="448649at2759"/>
<dbReference type="PhylomeDB" id="Q9VBV5"/>
<dbReference type="BioGRID-ORCS" id="43034">
    <property type="hits" value="0 hits in 1 CRISPR screen"/>
</dbReference>
<dbReference type="GenomeRNAi" id="43034"/>
<dbReference type="PRO" id="PR:Q9VBV5"/>
<dbReference type="Proteomes" id="UP000000803">
    <property type="component" value="Chromosome 3R"/>
</dbReference>
<dbReference type="Bgee" id="FBgn0039296">
    <property type="expression patterns" value="Expressed in adult oenocyte (Drosophila) in adult thorax and 77 other cell types or tissues"/>
</dbReference>
<dbReference type="GO" id="GO:0012505">
    <property type="term" value="C:endomembrane system"/>
    <property type="evidence" value="ECO:0007005"/>
    <property type="project" value="FlyBase"/>
</dbReference>
<dbReference type="GO" id="GO:0005783">
    <property type="term" value="C:endoplasmic reticulum"/>
    <property type="evidence" value="ECO:0000250"/>
    <property type="project" value="UniProtKB"/>
</dbReference>
<dbReference type="GO" id="GO:0005788">
    <property type="term" value="C:endoplasmic reticulum lumen"/>
    <property type="evidence" value="ECO:0007669"/>
    <property type="project" value="UniProtKB-SubCell"/>
</dbReference>
<dbReference type="GO" id="GO:0000774">
    <property type="term" value="F:adenyl-nucleotide exchange factor activity"/>
    <property type="evidence" value="ECO:0000250"/>
    <property type="project" value="FlyBase"/>
</dbReference>
<dbReference type="GO" id="GO:0006616">
    <property type="term" value="P:SRP-dependent cotranslational protein targeting to membrane, translocation"/>
    <property type="evidence" value="ECO:0000250"/>
    <property type="project" value="UniProtKB"/>
</dbReference>
<dbReference type="FunFam" id="1.25.10.10:FF:001026">
    <property type="entry name" value="GM17740"/>
    <property type="match status" value="1"/>
</dbReference>
<dbReference type="Gene3D" id="1.25.10.10">
    <property type="entry name" value="Leucine-rich Repeat Variant"/>
    <property type="match status" value="1"/>
</dbReference>
<dbReference type="InterPro" id="IPR011989">
    <property type="entry name" value="ARM-like"/>
</dbReference>
<dbReference type="InterPro" id="IPR016024">
    <property type="entry name" value="ARM-type_fold"/>
</dbReference>
<dbReference type="InterPro" id="IPR050693">
    <property type="entry name" value="Hsp70_NEF-Inhibitors"/>
</dbReference>
<dbReference type="PANTHER" id="PTHR19316:SF35">
    <property type="entry name" value="NUCLEOTIDE EXCHANGE FACTOR SIL1"/>
    <property type="match status" value="1"/>
</dbReference>
<dbReference type="PANTHER" id="PTHR19316">
    <property type="entry name" value="PROTEIN FOLDING REGULATOR"/>
    <property type="match status" value="1"/>
</dbReference>
<dbReference type="SUPFAM" id="SSF48371">
    <property type="entry name" value="ARM repeat"/>
    <property type="match status" value="1"/>
</dbReference>